<name>NADK_CALS8</name>
<comment type="function">
    <text evidence="1">Involved in the regulation of the intracellular balance of NAD and NADP, and is a key enzyme in the biosynthesis of NADP. Catalyzes specifically the phosphorylation on 2'-hydroxyl of the adenosine moiety of NAD to yield NADP.</text>
</comment>
<comment type="catalytic activity">
    <reaction evidence="1">
        <text>NAD(+) + ATP = ADP + NADP(+) + H(+)</text>
        <dbReference type="Rhea" id="RHEA:18629"/>
        <dbReference type="ChEBI" id="CHEBI:15378"/>
        <dbReference type="ChEBI" id="CHEBI:30616"/>
        <dbReference type="ChEBI" id="CHEBI:57540"/>
        <dbReference type="ChEBI" id="CHEBI:58349"/>
        <dbReference type="ChEBI" id="CHEBI:456216"/>
        <dbReference type="EC" id="2.7.1.23"/>
    </reaction>
</comment>
<comment type="cofactor">
    <cofactor evidence="1">
        <name>a divalent metal cation</name>
        <dbReference type="ChEBI" id="CHEBI:60240"/>
    </cofactor>
</comment>
<comment type="subcellular location">
    <subcellularLocation>
        <location evidence="1">Cytoplasm</location>
    </subcellularLocation>
</comment>
<comment type="similarity">
    <text evidence="1">Belongs to the NAD kinase family.</text>
</comment>
<protein>
    <recommendedName>
        <fullName evidence="1">NAD kinase</fullName>
        <ecNumber evidence="1">2.7.1.23</ecNumber>
    </recommendedName>
    <alternativeName>
        <fullName evidence="1">ATP-dependent NAD kinase</fullName>
    </alternativeName>
</protein>
<feature type="chain" id="PRO_1000059865" description="NAD kinase">
    <location>
        <begin position="1"/>
        <end position="260"/>
    </location>
</feature>
<feature type="active site" description="Proton acceptor" evidence="1">
    <location>
        <position position="54"/>
    </location>
</feature>
<feature type="binding site" evidence="1">
    <location>
        <begin position="54"/>
        <end position="55"/>
    </location>
    <ligand>
        <name>NAD(+)</name>
        <dbReference type="ChEBI" id="CHEBI:57540"/>
    </ligand>
</feature>
<feature type="binding site" evidence="1">
    <location>
        <begin position="123"/>
        <end position="124"/>
    </location>
    <ligand>
        <name>NAD(+)</name>
        <dbReference type="ChEBI" id="CHEBI:57540"/>
    </ligand>
</feature>
<feature type="binding site" evidence="1">
    <location>
        <position position="150"/>
    </location>
    <ligand>
        <name>NAD(+)</name>
        <dbReference type="ChEBI" id="CHEBI:57540"/>
    </ligand>
</feature>
<feature type="binding site" evidence="1">
    <location>
        <position position="152"/>
    </location>
    <ligand>
        <name>NAD(+)</name>
        <dbReference type="ChEBI" id="CHEBI:57540"/>
    </ligand>
</feature>
<feature type="binding site" evidence="1">
    <location>
        <begin position="163"/>
        <end position="168"/>
    </location>
    <ligand>
        <name>NAD(+)</name>
        <dbReference type="ChEBI" id="CHEBI:57540"/>
    </ligand>
</feature>
<accession>A4XKP6</accession>
<gene>
    <name evidence="1" type="primary">nadK</name>
    <name type="ordered locus">Csac_1896</name>
</gene>
<reference key="1">
    <citation type="submission" date="2007-04" db="EMBL/GenBank/DDBJ databases">
        <title>Genome sequence of the thermophilic hydrogen-producing bacterium Caldicellulosiruptor saccharolyticus DSM 8903.</title>
        <authorList>
            <person name="Copeland A."/>
            <person name="Lucas S."/>
            <person name="Lapidus A."/>
            <person name="Barry K."/>
            <person name="Detter J.C."/>
            <person name="Glavina del Rio T."/>
            <person name="Hammon N."/>
            <person name="Israni S."/>
            <person name="Dalin E."/>
            <person name="Tice H."/>
            <person name="Pitluck S."/>
            <person name="Kiss H."/>
            <person name="Brettin T."/>
            <person name="Bruce D."/>
            <person name="Han C."/>
            <person name="Schmutz J."/>
            <person name="Larimer F."/>
            <person name="Land M."/>
            <person name="Hauser L."/>
            <person name="Kyrpides N."/>
            <person name="Lykidis A."/>
            <person name="van de Werken H.J.G."/>
            <person name="Verhaart M.R.A."/>
            <person name="VanFossen A.L."/>
            <person name="Lewis D.L."/>
            <person name="Nichols J.D."/>
            <person name="Goorissen H.P."/>
            <person name="van Niel E.W.J."/>
            <person name="Stams F.J.M."/>
            <person name="Willquist K.U."/>
            <person name="Ward D.E."/>
            <person name="van der Oost J."/>
            <person name="Kelly R.M."/>
            <person name="Kengen S.M.W."/>
            <person name="Richardson P."/>
        </authorList>
    </citation>
    <scope>NUCLEOTIDE SEQUENCE [LARGE SCALE GENOMIC DNA]</scope>
    <source>
        <strain>ATCC 43494 / DSM 8903 / Tp8T 6331</strain>
    </source>
</reference>
<proteinExistence type="inferred from homology"/>
<evidence type="ECO:0000255" key="1">
    <source>
        <dbReference type="HAMAP-Rule" id="MF_00361"/>
    </source>
</evidence>
<keyword id="KW-0067">ATP-binding</keyword>
<keyword id="KW-0963">Cytoplasm</keyword>
<keyword id="KW-0418">Kinase</keyword>
<keyword id="KW-0520">NAD</keyword>
<keyword id="KW-0521">NADP</keyword>
<keyword id="KW-0547">Nucleotide-binding</keyword>
<keyword id="KW-0808">Transferase</keyword>
<dbReference type="EC" id="2.7.1.23" evidence="1"/>
<dbReference type="EMBL" id="CP000679">
    <property type="protein sequence ID" value="ABP67481.1"/>
    <property type="molecule type" value="Genomic_DNA"/>
</dbReference>
<dbReference type="RefSeq" id="WP_011917417.1">
    <property type="nucleotide sequence ID" value="NC_009437.1"/>
</dbReference>
<dbReference type="SMR" id="A4XKP6"/>
<dbReference type="STRING" id="351627.Csac_1896"/>
<dbReference type="KEGG" id="csc:Csac_1896"/>
<dbReference type="eggNOG" id="COG0061">
    <property type="taxonomic scope" value="Bacteria"/>
</dbReference>
<dbReference type="HOGENOM" id="CLU_008831_0_1_9"/>
<dbReference type="OrthoDB" id="9774737at2"/>
<dbReference type="Proteomes" id="UP000000256">
    <property type="component" value="Chromosome"/>
</dbReference>
<dbReference type="GO" id="GO:0005737">
    <property type="term" value="C:cytoplasm"/>
    <property type="evidence" value="ECO:0007669"/>
    <property type="project" value="UniProtKB-SubCell"/>
</dbReference>
<dbReference type="GO" id="GO:0005524">
    <property type="term" value="F:ATP binding"/>
    <property type="evidence" value="ECO:0007669"/>
    <property type="project" value="UniProtKB-KW"/>
</dbReference>
<dbReference type="GO" id="GO:0046872">
    <property type="term" value="F:metal ion binding"/>
    <property type="evidence" value="ECO:0007669"/>
    <property type="project" value="UniProtKB-UniRule"/>
</dbReference>
<dbReference type="GO" id="GO:0051287">
    <property type="term" value="F:NAD binding"/>
    <property type="evidence" value="ECO:0007669"/>
    <property type="project" value="UniProtKB-ARBA"/>
</dbReference>
<dbReference type="GO" id="GO:0003951">
    <property type="term" value="F:NAD+ kinase activity"/>
    <property type="evidence" value="ECO:0007669"/>
    <property type="project" value="UniProtKB-UniRule"/>
</dbReference>
<dbReference type="GO" id="GO:0019674">
    <property type="term" value="P:NAD metabolic process"/>
    <property type="evidence" value="ECO:0007669"/>
    <property type="project" value="InterPro"/>
</dbReference>
<dbReference type="GO" id="GO:0006741">
    <property type="term" value="P:NADP biosynthetic process"/>
    <property type="evidence" value="ECO:0007669"/>
    <property type="project" value="UniProtKB-UniRule"/>
</dbReference>
<dbReference type="Gene3D" id="3.40.50.10330">
    <property type="entry name" value="Probable inorganic polyphosphate/atp-NAD kinase, domain 1"/>
    <property type="match status" value="1"/>
</dbReference>
<dbReference type="Gene3D" id="2.60.200.30">
    <property type="entry name" value="Probable inorganic polyphosphate/atp-NAD kinase, domain 2"/>
    <property type="match status" value="1"/>
</dbReference>
<dbReference type="HAMAP" id="MF_00361">
    <property type="entry name" value="NAD_kinase"/>
    <property type="match status" value="1"/>
</dbReference>
<dbReference type="InterPro" id="IPR017438">
    <property type="entry name" value="ATP-NAD_kinase_N"/>
</dbReference>
<dbReference type="InterPro" id="IPR017437">
    <property type="entry name" value="ATP-NAD_kinase_PpnK-typ_C"/>
</dbReference>
<dbReference type="InterPro" id="IPR016064">
    <property type="entry name" value="NAD/diacylglycerol_kinase_sf"/>
</dbReference>
<dbReference type="InterPro" id="IPR002504">
    <property type="entry name" value="NADK"/>
</dbReference>
<dbReference type="PANTHER" id="PTHR20275">
    <property type="entry name" value="NAD KINASE"/>
    <property type="match status" value="1"/>
</dbReference>
<dbReference type="PANTHER" id="PTHR20275:SF0">
    <property type="entry name" value="NAD KINASE"/>
    <property type="match status" value="1"/>
</dbReference>
<dbReference type="Pfam" id="PF01513">
    <property type="entry name" value="NAD_kinase"/>
    <property type="match status" value="1"/>
</dbReference>
<dbReference type="Pfam" id="PF20143">
    <property type="entry name" value="NAD_kinase_C"/>
    <property type="match status" value="1"/>
</dbReference>
<dbReference type="SUPFAM" id="SSF111331">
    <property type="entry name" value="NAD kinase/diacylglycerol kinase-like"/>
    <property type="match status" value="1"/>
</dbReference>
<sequence length="260" mass="29141">MIVGVFANFQKELSKEILDKIVSVLKNEKIDWVLMNEKNKDSVKVNFLITIGGDGTLLNVVEKVAKENLPVLGINCGRVGYLTEEVADNIHFAIKKIIDNDYFIEERHLVEAHFKDKIFYALNDICLARSTFNIIDLSLYIDEVFAQEYRSDGIIIATATGSTAYSLSAGGPIVEPQLGVMVVTPICPHSLSSRSLVLGDDRVVKIKSESDEVLVVSDGRVADTLKKGEYLECKISSKKLKLVRLKKKNFYEVLREKIKE</sequence>
<organism>
    <name type="scientific">Caldicellulosiruptor saccharolyticus (strain ATCC 43494 / DSM 8903 / Tp8T 6331)</name>
    <dbReference type="NCBI Taxonomy" id="351627"/>
    <lineage>
        <taxon>Bacteria</taxon>
        <taxon>Bacillati</taxon>
        <taxon>Bacillota</taxon>
        <taxon>Bacillota incertae sedis</taxon>
        <taxon>Caldicellulosiruptorales</taxon>
        <taxon>Caldicellulosiruptoraceae</taxon>
        <taxon>Caldicellulosiruptor</taxon>
    </lineage>
</organism>